<name>RIHA_SHISS</name>
<protein>
    <recommendedName>
        <fullName evidence="1">Pyrimidine-specific ribonucleoside hydrolase RihA</fullName>
        <ecNumber evidence="1">3.2.-.-</ecNumber>
    </recommendedName>
    <alternativeName>
        <fullName evidence="1">Cytidine/uridine-specific hydrolase</fullName>
    </alternativeName>
</protein>
<evidence type="ECO:0000255" key="1">
    <source>
        <dbReference type="HAMAP-Rule" id="MF_01431"/>
    </source>
</evidence>
<proteinExistence type="inferred from homology"/>
<feature type="chain" id="PRO_0000206823" description="Pyrimidine-specific ribonucleoside hydrolase RihA">
    <location>
        <begin position="1"/>
        <end position="311"/>
    </location>
</feature>
<feature type="active site" evidence="1">
    <location>
        <position position="240"/>
    </location>
</feature>
<organism>
    <name type="scientific">Shigella sonnei (strain Ss046)</name>
    <dbReference type="NCBI Taxonomy" id="300269"/>
    <lineage>
        <taxon>Bacteria</taxon>
        <taxon>Pseudomonadati</taxon>
        <taxon>Pseudomonadota</taxon>
        <taxon>Gammaproteobacteria</taxon>
        <taxon>Enterobacterales</taxon>
        <taxon>Enterobacteriaceae</taxon>
        <taxon>Shigella</taxon>
    </lineage>
</organism>
<accession>Q3Z4E1</accession>
<dbReference type="EC" id="3.2.-.-" evidence="1"/>
<dbReference type="EMBL" id="CP000038">
    <property type="protein sequence ID" value="AAZ87371.1"/>
    <property type="molecule type" value="Genomic_DNA"/>
</dbReference>
<dbReference type="RefSeq" id="WP_001207522.1">
    <property type="nucleotide sequence ID" value="NC_007384.1"/>
</dbReference>
<dbReference type="SMR" id="Q3Z4E1"/>
<dbReference type="GeneID" id="93776831"/>
<dbReference type="KEGG" id="ssn:SSON_0605"/>
<dbReference type="HOGENOM" id="CLU_036838_2_0_6"/>
<dbReference type="Proteomes" id="UP000002529">
    <property type="component" value="Chromosome"/>
</dbReference>
<dbReference type="GO" id="GO:0005829">
    <property type="term" value="C:cytosol"/>
    <property type="evidence" value="ECO:0007669"/>
    <property type="project" value="TreeGrafter"/>
</dbReference>
<dbReference type="GO" id="GO:0008477">
    <property type="term" value="F:purine nucleosidase activity"/>
    <property type="evidence" value="ECO:0007669"/>
    <property type="project" value="TreeGrafter"/>
</dbReference>
<dbReference type="GO" id="GO:0045437">
    <property type="term" value="F:uridine nucleosidase activity"/>
    <property type="evidence" value="ECO:0007669"/>
    <property type="project" value="InterPro"/>
</dbReference>
<dbReference type="GO" id="GO:0015949">
    <property type="term" value="P:nucleobase-containing small molecule interconversion"/>
    <property type="evidence" value="ECO:0007669"/>
    <property type="project" value="InterPro"/>
</dbReference>
<dbReference type="GO" id="GO:0006152">
    <property type="term" value="P:purine nucleoside catabolic process"/>
    <property type="evidence" value="ECO:0007669"/>
    <property type="project" value="TreeGrafter"/>
</dbReference>
<dbReference type="GO" id="GO:0006206">
    <property type="term" value="P:pyrimidine nucleobase metabolic process"/>
    <property type="evidence" value="ECO:0007669"/>
    <property type="project" value="UniProtKB-UniRule"/>
</dbReference>
<dbReference type="CDD" id="cd02651">
    <property type="entry name" value="nuc_hydro_IU_UC_XIUA"/>
    <property type="match status" value="1"/>
</dbReference>
<dbReference type="FunFam" id="3.90.245.10:FF:000001">
    <property type="entry name" value="Pyrimidine-specific ribonucleoside hydrolase RihA"/>
    <property type="match status" value="1"/>
</dbReference>
<dbReference type="Gene3D" id="3.90.245.10">
    <property type="entry name" value="Ribonucleoside hydrolase-like"/>
    <property type="match status" value="1"/>
</dbReference>
<dbReference type="HAMAP" id="MF_01431">
    <property type="entry name" value="Pyrim_hydro_RihA"/>
    <property type="match status" value="1"/>
</dbReference>
<dbReference type="InterPro" id="IPR015910">
    <property type="entry name" value="I/U_nuclsd_hydro_CS"/>
</dbReference>
<dbReference type="InterPro" id="IPR001910">
    <property type="entry name" value="Inosine/uridine_hydrolase_dom"/>
</dbReference>
<dbReference type="InterPro" id="IPR023186">
    <property type="entry name" value="IUNH"/>
</dbReference>
<dbReference type="InterPro" id="IPR022975">
    <property type="entry name" value="Pyrim_hydro_RihA"/>
</dbReference>
<dbReference type="InterPro" id="IPR036452">
    <property type="entry name" value="Ribo_hydro-like"/>
</dbReference>
<dbReference type="NCBIfam" id="NF007761">
    <property type="entry name" value="PRK10443.1"/>
    <property type="match status" value="1"/>
</dbReference>
<dbReference type="PANTHER" id="PTHR12304">
    <property type="entry name" value="INOSINE-URIDINE PREFERRING NUCLEOSIDE HYDROLASE"/>
    <property type="match status" value="1"/>
</dbReference>
<dbReference type="PANTHER" id="PTHR12304:SF4">
    <property type="entry name" value="URIDINE NUCLEOSIDASE"/>
    <property type="match status" value="1"/>
</dbReference>
<dbReference type="Pfam" id="PF01156">
    <property type="entry name" value="IU_nuc_hydro"/>
    <property type="match status" value="1"/>
</dbReference>
<dbReference type="SUPFAM" id="SSF53590">
    <property type="entry name" value="Nucleoside hydrolase"/>
    <property type="match status" value="1"/>
</dbReference>
<dbReference type="PROSITE" id="PS01247">
    <property type="entry name" value="IUNH"/>
    <property type="match status" value="1"/>
</dbReference>
<comment type="function">
    <text evidence="1">Hydrolyzes cytidine or uridine to ribose and cytosine or uracil, respectively.</text>
</comment>
<comment type="similarity">
    <text evidence="1">Belongs to the IUNH family. RihA subfamily.</text>
</comment>
<gene>
    <name evidence="1" type="primary">rihA</name>
    <name type="ordered locus">SSON_0605</name>
</gene>
<reference key="1">
    <citation type="journal article" date="2005" name="Nucleic Acids Res.">
        <title>Genome dynamics and diversity of Shigella species, the etiologic agents of bacillary dysentery.</title>
        <authorList>
            <person name="Yang F."/>
            <person name="Yang J."/>
            <person name="Zhang X."/>
            <person name="Chen L."/>
            <person name="Jiang Y."/>
            <person name="Yan Y."/>
            <person name="Tang X."/>
            <person name="Wang J."/>
            <person name="Xiong Z."/>
            <person name="Dong J."/>
            <person name="Xue Y."/>
            <person name="Zhu Y."/>
            <person name="Xu X."/>
            <person name="Sun L."/>
            <person name="Chen S."/>
            <person name="Nie H."/>
            <person name="Peng J."/>
            <person name="Xu J."/>
            <person name="Wang Y."/>
            <person name="Yuan Z."/>
            <person name="Wen Y."/>
            <person name="Yao Z."/>
            <person name="Shen Y."/>
            <person name="Qiang B."/>
            <person name="Hou Y."/>
            <person name="Yu J."/>
            <person name="Jin Q."/>
        </authorList>
    </citation>
    <scope>NUCLEOTIDE SEQUENCE [LARGE SCALE GENOMIC DNA]</scope>
    <source>
        <strain>Ss046</strain>
    </source>
</reference>
<keyword id="KW-0326">Glycosidase</keyword>
<keyword id="KW-0378">Hydrolase</keyword>
<keyword id="KW-1185">Reference proteome</keyword>
<sequence length="311" mass="33823">MALPILLDCDPGHDDAIAIVLALASPELDVKAITSSAGNQTPEKTLRNVLRMLTLLNRTDIPVAGGAVKPLMRELIIADNVHGESGLDGPALPEPTFAPQNCTAVELMAKTLRESAEPVTIVSTGPQTNVALLLNSHPELHSKIARIVIMGGAMGLGNWTPAAEFNIYVDPEAAEIVFQSGIPVVMAGLDVTHKAQIHVEDTERFRAIGNPVSTIVAELLDFFLEYHKDEKWGFVGAPLHDPCTIAWLLKPELFTTVERWVGVETQGKYSQGMTVVDYYYLTGNKPNATVMVDVDRQGFVDLLADRLKFYA</sequence>